<sequence>MPELPEVETVRKGLNQLTLNQEITGGDVLLNRTIAYPFSVGEFVDGIEKNAIATWHRRGKYLLAELSSPCSTSWLGVHLRMTGQLLWLHRDEPLHKHTRVRLFFGDQQELRFVDQRTFGKIWWVPPGVAVESIITGLAKLAADPFSPEFSVEYLASKLKNRRRPIKTALLDQSVVAGLGNIYADEALFKSGILPETLCIDLQLKQIELLRTAIIQVLETSIEAGGTTFSNFLNVKGTNGNYGGVAWVYNRAGEPCRVCGMPIQRIRLAGRSSHFCSECQTLRGVENRERRD</sequence>
<dbReference type="EC" id="3.2.2.23" evidence="2"/>
<dbReference type="EC" id="4.2.99.18" evidence="2"/>
<dbReference type="EMBL" id="CP001037">
    <property type="protein sequence ID" value="ACC82317.1"/>
    <property type="molecule type" value="Genomic_DNA"/>
</dbReference>
<dbReference type="RefSeq" id="WP_012410285.1">
    <property type="nucleotide sequence ID" value="NC_010628.1"/>
</dbReference>
<dbReference type="SMR" id="B2J5G0"/>
<dbReference type="STRING" id="63737.Npun_R3936"/>
<dbReference type="EnsemblBacteria" id="ACC82317">
    <property type="protein sequence ID" value="ACC82317"/>
    <property type="gene ID" value="Npun_R3936"/>
</dbReference>
<dbReference type="KEGG" id="npu:Npun_R3936"/>
<dbReference type="eggNOG" id="COG0266">
    <property type="taxonomic scope" value="Bacteria"/>
</dbReference>
<dbReference type="HOGENOM" id="CLU_038423_1_2_3"/>
<dbReference type="OrthoDB" id="9800855at2"/>
<dbReference type="PhylomeDB" id="B2J5G0"/>
<dbReference type="Proteomes" id="UP000001191">
    <property type="component" value="Chromosome"/>
</dbReference>
<dbReference type="GO" id="GO:0034039">
    <property type="term" value="F:8-oxo-7,8-dihydroguanine DNA N-glycosylase activity"/>
    <property type="evidence" value="ECO:0007669"/>
    <property type="project" value="TreeGrafter"/>
</dbReference>
<dbReference type="GO" id="GO:0140078">
    <property type="term" value="F:class I DNA-(apurinic or apyrimidinic site) endonuclease activity"/>
    <property type="evidence" value="ECO:0007669"/>
    <property type="project" value="UniProtKB-EC"/>
</dbReference>
<dbReference type="GO" id="GO:0003684">
    <property type="term" value="F:damaged DNA binding"/>
    <property type="evidence" value="ECO:0007669"/>
    <property type="project" value="InterPro"/>
</dbReference>
<dbReference type="GO" id="GO:0008270">
    <property type="term" value="F:zinc ion binding"/>
    <property type="evidence" value="ECO:0007669"/>
    <property type="project" value="UniProtKB-UniRule"/>
</dbReference>
<dbReference type="GO" id="GO:0006284">
    <property type="term" value="P:base-excision repair"/>
    <property type="evidence" value="ECO:0007669"/>
    <property type="project" value="InterPro"/>
</dbReference>
<dbReference type="CDD" id="cd08966">
    <property type="entry name" value="EcFpg-like_N"/>
    <property type="match status" value="1"/>
</dbReference>
<dbReference type="FunFam" id="1.10.8.50:FF:000003">
    <property type="entry name" value="Formamidopyrimidine-DNA glycosylase"/>
    <property type="match status" value="1"/>
</dbReference>
<dbReference type="Gene3D" id="1.10.8.50">
    <property type="match status" value="1"/>
</dbReference>
<dbReference type="Gene3D" id="3.20.190.10">
    <property type="entry name" value="MutM-like, N-terminal"/>
    <property type="match status" value="1"/>
</dbReference>
<dbReference type="HAMAP" id="MF_00103">
    <property type="entry name" value="Fapy_DNA_glycosyl"/>
    <property type="match status" value="1"/>
</dbReference>
<dbReference type="InterPro" id="IPR015886">
    <property type="entry name" value="DNA_glyclase/AP_lyase_DNA-bd"/>
</dbReference>
<dbReference type="InterPro" id="IPR015887">
    <property type="entry name" value="DNA_glyclase_Znf_dom_DNA_BS"/>
</dbReference>
<dbReference type="InterPro" id="IPR020629">
    <property type="entry name" value="Formamido-pyr_DNA_Glyclase"/>
</dbReference>
<dbReference type="InterPro" id="IPR012319">
    <property type="entry name" value="FPG_cat"/>
</dbReference>
<dbReference type="InterPro" id="IPR035937">
    <property type="entry name" value="MutM-like_N-ter"/>
</dbReference>
<dbReference type="InterPro" id="IPR010979">
    <property type="entry name" value="Ribosomal_uS13-like_H2TH"/>
</dbReference>
<dbReference type="InterPro" id="IPR000214">
    <property type="entry name" value="Znf_DNA_glyclase/AP_lyase"/>
</dbReference>
<dbReference type="InterPro" id="IPR010663">
    <property type="entry name" value="Znf_FPG/IleRS"/>
</dbReference>
<dbReference type="NCBIfam" id="TIGR00577">
    <property type="entry name" value="fpg"/>
    <property type="match status" value="1"/>
</dbReference>
<dbReference type="NCBIfam" id="NF002211">
    <property type="entry name" value="PRK01103.1"/>
    <property type="match status" value="1"/>
</dbReference>
<dbReference type="NCBIfam" id="NF010551">
    <property type="entry name" value="PRK13945.1"/>
    <property type="match status" value="1"/>
</dbReference>
<dbReference type="PANTHER" id="PTHR22993">
    <property type="entry name" value="FORMAMIDOPYRIMIDINE-DNA GLYCOSYLASE"/>
    <property type="match status" value="1"/>
</dbReference>
<dbReference type="PANTHER" id="PTHR22993:SF9">
    <property type="entry name" value="FORMAMIDOPYRIMIDINE-DNA GLYCOSYLASE"/>
    <property type="match status" value="1"/>
</dbReference>
<dbReference type="Pfam" id="PF01149">
    <property type="entry name" value="Fapy_DNA_glyco"/>
    <property type="match status" value="1"/>
</dbReference>
<dbReference type="Pfam" id="PF06831">
    <property type="entry name" value="H2TH"/>
    <property type="match status" value="1"/>
</dbReference>
<dbReference type="Pfam" id="PF06827">
    <property type="entry name" value="zf-FPG_IleRS"/>
    <property type="match status" value="1"/>
</dbReference>
<dbReference type="SMART" id="SM00898">
    <property type="entry name" value="Fapy_DNA_glyco"/>
    <property type="match status" value="1"/>
</dbReference>
<dbReference type="SMART" id="SM01232">
    <property type="entry name" value="H2TH"/>
    <property type="match status" value="1"/>
</dbReference>
<dbReference type="SUPFAM" id="SSF57716">
    <property type="entry name" value="Glucocorticoid receptor-like (DNA-binding domain)"/>
    <property type="match status" value="1"/>
</dbReference>
<dbReference type="SUPFAM" id="SSF81624">
    <property type="entry name" value="N-terminal domain of MutM-like DNA repair proteins"/>
    <property type="match status" value="1"/>
</dbReference>
<dbReference type="SUPFAM" id="SSF46946">
    <property type="entry name" value="S13-like H2TH domain"/>
    <property type="match status" value="1"/>
</dbReference>
<dbReference type="PROSITE" id="PS51068">
    <property type="entry name" value="FPG_CAT"/>
    <property type="match status" value="1"/>
</dbReference>
<dbReference type="PROSITE" id="PS01242">
    <property type="entry name" value="ZF_FPG_1"/>
    <property type="match status" value="1"/>
</dbReference>
<dbReference type="PROSITE" id="PS51066">
    <property type="entry name" value="ZF_FPG_2"/>
    <property type="match status" value="1"/>
</dbReference>
<organism>
    <name type="scientific">Nostoc punctiforme (strain ATCC 29133 / PCC 73102)</name>
    <dbReference type="NCBI Taxonomy" id="63737"/>
    <lineage>
        <taxon>Bacteria</taxon>
        <taxon>Bacillati</taxon>
        <taxon>Cyanobacteriota</taxon>
        <taxon>Cyanophyceae</taxon>
        <taxon>Nostocales</taxon>
        <taxon>Nostocaceae</taxon>
        <taxon>Nostoc</taxon>
    </lineage>
</organism>
<proteinExistence type="inferred from homology"/>
<keyword id="KW-0227">DNA damage</keyword>
<keyword id="KW-0234">DNA repair</keyword>
<keyword id="KW-0238">DNA-binding</keyword>
<keyword id="KW-0326">Glycosidase</keyword>
<keyword id="KW-0378">Hydrolase</keyword>
<keyword id="KW-0456">Lyase</keyword>
<keyword id="KW-0479">Metal-binding</keyword>
<keyword id="KW-0511">Multifunctional enzyme</keyword>
<keyword id="KW-1185">Reference proteome</keyword>
<keyword id="KW-0862">Zinc</keyword>
<keyword id="KW-0863">Zinc-finger</keyword>
<name>FPG_NOSP7</name>
<evidence type="ECO:0000250" key="1"/>
<evidence type="ECO:0000255" key="2">
    <source>
        <dbReference type="HAMAP-Rule" id="MF_00103"/>
    </source>
</evidence>
<gene>
    <name evidence="2" type="primary">mutM</name>
    <name evidence="2" type="synonym">fpg</name>
    <name type="ordered locus">Npun_R3936</name>
</gene>
<reference key="1">
    <citation type="journal article" date="2013" name="Plant Physiol.">
        <title>A Nostoc punctiforme Sugar Transporter Necessary to Establish a Cyanobacterium-Plant Symbiosis.</title>
        <authorList>
            <person name="Ekman M."/>
            <person name="Picossi S."/>
            <person name="Campbell E.L."/>
            <person name="Meeks J.C."/>
            <person name="Flores E."/>
        </authorList>
    </citation>
    <scope>NUCLEOTIDE SEQUENCE [LARGE SCALE GENOMIC DNA]</scope>
    <source>
        <strain>ATCC 29133 / PCC 73102</strain>
    </source>
</reference>
<accession>B2J5G0</accession>
<comment type="function">
    <text evidence="2">Involved in base excision repair of DNA damaged by oxidation or by mutagenic agents. Acts as a DNA glycosylase that recognizes and removes damaged bases. Has a preference for oxidized purines, such as 7,8-dihydro-8-oxoguanine (8-oxoG). Has AP (apurinic/apyrimidinic) lyase activity and introduces nicks in the DNA strand. Cleaves the DNA backbone by beta-delta elimination to generate a single-strand break at the site of the removed base with both 3'- and 5'-phosphates.</text>
</comment>
<comment type="catalytic activity">
    <reaction evidence="2">
        <text>Hydrolysis of DNA containing ring-opened 7-methylguanine residues, releasing 2,6-diamino-4-hydroxy-5-(N-methyl)formamidopyrimidine.</text>
        <dbReference type="EC" id="3.2.2.23"/>
    </reaction>
</comment>
<comment type="catalytic activity">
    <reaction evidence="2">
        <text>2'-deoxyribonucleotide-(2'-deoxyribose 5'-phosphate)-2'-deoxyribonucleotide-DNA = a 3'-end 2'-deoxyribonucleotide-(2,3-dehydro-2,3-deoxyribose 5'-phosphate)-DNA + a 5'-end 5'-phospho-2'-deoxyribonucleoside-DNA + H(+)</text>
        <dbReference type="Rhea" id="RHEA:66592"/>
        <dbReference type="Rhea" id="RHEA-COMP:13180"/>
        <dbReference type="Rhea" id="RHEA-COMP:16897"/>
        <dbReference type="Rhea" id="RHEA-COMP:17067"/>
        <dbReference type="ChEBI" id="CHEBI:15378"/>
        <dbReference type="ChEBI" id="CHEBI:136412"/>
        <dbReference type="ChEBI" id="CHEBI:157695"/>
        <dbReference type="ChEBI" id="CHEBI:167181"/>
        <dbReference type="EC" id="4.2.99.18"/>
    </reaction>
</comment>
<comment type="cofactor">
    <cofactor evidence="2">
        <name>Zn(2+)</name>
        <dbReference type="ChEBI" id="CHEBI:29105"/>
    </cofactor>
    <text evidence="2">Binds 1 zinc ion per subunit.</text>
</comment>
<comment type="subunit">
    <text evidence="2">Monomer.</text>
</comment>
<comment type="similarity">
    <text evidence="2">Belongs to the FPG family.</text>
</comment>
<protein>
    <recommendedName>
        <fullName evidence="2">Formamidopyrimidine-DNA glycosylase</fullName>
        <shortName evidence="2">Fapy-DNA glycosylase</shortName>
        <ecNumber evidence="2">3.2.2.23</ecNumber>
    </recommendedName>
    <alternativeName>
        <fullName evidence="2">DNA-(apurinic or apyrimidinic site) lyase MutM</fullName>
        <shortName evidence="2">AP lyase MutM</shortName>
        <ecNumber evidence="2">4.2.99.18</ecNumber>
    </alternativeName>
</protein>
<feature type="initiator methionine" description="Removed" evidence="1">
    <location>
        <position position="1"/>
    </location>
</feature>
<feature type="chain" id="PRO_1000094058" description="Formamidopyrimidine-DNA glycosylase">
    <location>
        <begin position="2"/>
        <end position="291"/>
    </location>
</feature>
<feature type="zinc finger region" description="FPG-type" evidence="2">
    <location>
        <begin position="246"/>
        <end position="280"/>
    </location>
</feature>
<feature type="active site" description="Schiff-base intermediate with DNA" evidence="2">
    <location>
        <position position="2"/>
    </location>
</feature>
<feature type="active site" description="Proton donor" evidence="2">
    <location>
        <position position="3"/>
    </location>
</feature>
<feature type="active site" description="Proton donor; for beta-elimination activity" evidence="2">
    <location>
        <position position="60"/>
    </location>
</feature>
<feature type="active site" description="Proton donor; for delta-elimination activity" evidence="2">
    <location>
        <position position="270"/>
    </location>
</feature>
<feature type="binding site" evidence="2">
    <location>
        <position position="97"/>
    </location>
    <ligand>
        <name>DNA</name>
        <dbReference type="ChEBI" id="CHEBI:16991"/>
    </ligand>
</feature>
<feature type="binding site" evidence="2">
    <location>
        <position position="116"/>
    </location>
    <ligand>
        <name>DNA</name>
        <dbReference type="ChEBI" id="CHEBI:16991"/>
    </ligand>
</feature>
<feature type="binding site" evidence="2">
    <location>
        <position position="161"/>
    </location>
    <ligand>
        <name>DNA</name>
        <dbReference type="ChEBI" id="CHEBI:16991"/>
    </ligand>
</feature>